<accession>C5A4Z9</accession>
<dbReference type="EMBL" id="CP001398">
    <property type="protein sequence ID" value="ACS33311.1"/>
    <property type="molecule type" value="Genomic_DNA"/>
</dbReference>
<dbReference type="RefSeq" id="WP_014121321.1">
    <property type="nucleotide sequence ID" value="NC_012804.1"/>
</dbReference>
<dbReference type="SMR" id="C5A4Z9"/>
<dbReference type="STRING" id="593117.TGAM_0809"/>
<dbReference type="PaxDb" id="593117-TGAM_0809"/>
<dbReference type="GeneID" id="7988976"/>
<dbReference type="KEGG" id="tga:TGAM_0809"/>
<dbReference type="PATRIC" id="fig|593117.10.peg.806"/>
<dbReference type="eggNOG" id="arCOG04107">
    <property type="taxonomic scope" value="Archaea"/>
</dbReference>
<dbReference type="HOGENOM" id="CLU_033458_0_2_2"/>
<dbReference type="OrthoDB" id="84794at2157"/>
<dbReference type="Proteomes" id="UP000001488">
    <property type="component" value="Chromosome"/>
</dbReference>
<dbReference type="GO" id="GO:0043022">
    <property type="term" value="F:ribosome binding"/>
    <property type="evidence" value="ECO:0007669"/>
    <property type="project" value="TreeGrafter"/>
</dbReference>
<dbReference type="GO" id="GO:0003723">
    <property type="term" value="F:RNA binding"/>
    <property type="evidence" value="ECO:0007669"/>
    <property type="project" value="UniProtKB-UniRule"/>
</dbReference>
<dbReference type="GO" id="GO:0003743">
    <property type="term" value="F:translation initiation factor activity"/>
    <property type="evidence" value="ECO:0007669"/>
    <property type="project" value="UniProtKB-UniRule"/>
</dbReference>
<dbReference type="CDD" id="cd04452">
    <property type="entry name" value="S1_IF2_alpha"/>
    <property type="match status" value="1"/>
</dbReference>
<dbReference type="FunFam" id="2.40.50.140:FF:000015">
    <property type="entry name" value="Eukaryotic translation initiation factor 2 subunit alpha"/>
    <property type="match status" value="1"/>
</dbReference>
<dbReference type="FunFam" id="1.10.150.190:FF:000006">
    <property type="entry name" value="Translation initiation factor 2 subunit alpha"/>
    <property type="match status" value="1"/>
</dbReference>
<dbReference type="FunFam" id="3.30.70.1130:FF:000002">
    <property type="entry name" value="Translation initiation factor 2 subunit alpha"/>
    <property type="match status" value="1"/>
</dbReference>
<dbReference type="Gene3D" id="3.30.70.1130">
    <property type="entry name" value="EIF_2_alpha"/>
    <property type="match status" value="1"/>
</dbReference>
<dbReference type="Gene3D" id="2.40.50.140">
    <property type="entry name" value="Nucleic acid-binding proteins"/>
    <property type="match status" value="1"/>
</dbReference>
<dbReference type="Gene3D" id="1.10.150.190">
    <property type="entry name" value="Translation initiation factor 2, subunit 1, domain 2"/>
    <property type="match status" value="1"/>
</dbReference>
<dbReference type="HAMAP" id="MF_00231">
    <property type="entry name" value="eIF_2_alpha"/>
    <property type="match status" value="1"/>
</dbReference>
<dbReference type="InterPro" id="IPR012340">
    <property type="entry name" value="NA-bd_OB-fold"/>
</dbReference>
<dbReference type="InterPro" id="IPR003029">
    <property type="entry name" value="S1_domain"/>
</dbReference>
<dbReference type="InterPro" id="IPR044126">
    <property type="entry name" value="S1_IF2_alpha"/>
</dbReference>
<dbReference type="InterPro" id="IPR022964">
    <property type="entry name" value="TIF2_asu_arc"/>
</dbReference>
<dbReference type="InterPro" id="IPR024055">
    <property type="entry name" value="TIF2_asu_C"/>
</dbReference>
<dbReference type="InterPro" id="IPR024054">
    <property type="entry name" value="TIF2_asu_middle_sf"/>
</dbReference>
<dbReference type="InterPro" id="IPR011488">
    <property type="entry name" value="TIF_2_asu"/>
</dbReference>
<dbReference type="NCBIfam" id="NF003062">
    <property type="entry name" value="PRK03987.1-1"/>
    <property type="match status" value="1"/>
</dbReference>
<dbReference type="NCBIfam" id="NF003064">
    <property type="entry name" value="PRK03987.1-4"/>
    <property type="match status" value="1"/>
</dbReference>
<dbReference type="NCBIfam" id="NF003066">
    <property type="entry name" value="PRK03987.1-6"/>
    <property type="match status" value="1"/>
</dbReference>
<dbReference type="PANTHER" id="PTHR10602">
    <property type="entry name" value="EUKARYOTIC TRANSLATION INITIATION FACTOR 2 SUBUNIT 1"/>
    <property type="match status" value="1"/>
</dbReference>
<dbReference type="PANTHER" id="PTHR10602:SF0">
    <property type="entry name" value="EUKARYOTIC TRANSLATION INITIATION FACTOR 2 SUBUNIT 1"/>
    <property type="match status" value="1"/>
</dbReference>
<dbReference type="Pfam" id="PF07541">
    <property type="entry name" value="EIF_2_alpha"/>
    <property type="match status" value="1"/>
</dbReference>
<dbReference type="Pfam" id="PF00575">
    <property type="entry name" value="S1"/>
    <property type="match status" value="1"/>
</dbReference>
<dbReference type="SMART" id="SM00316">
    <property type="entry name" value="S1"/>
    <property type="match status" value="1"/>
</dbReference>
<dbReference type="SUPFAM" id="SSF110993">
    <property type="entry name" value="eIF-2-alpha, C-terminal domain"/>
    <property type="match status" value="1"/>
</dbReference>
<dbReference type="SUPFAM" id="SSF116742">
    <property type="entry name" value="eIF2alpha middle domain-like"/>
    <property type="match status" value="1"/>
</dbReference>
<dbReference type="SUPFAM" id="SSF50249">
    <property type="entry name" value="Nucleic acid-binding proteins"/>
    <property type="match status" value="1"/>
</dbReference>
<dbReference type="PROSITE" id="PS50126">
    <property type="entry name" value="S1"/>
    <property type="match status" value="1"/>
</dbReference>
<keyword id="KW-0396">Initiation factor</keyword>
<keyword id="KW-0648">Protein biosynthesis</keyword>
<keyword id="KW-1185">Reference proteome</keyword>
<keyword id="KW-0694">RNA-binding</keyword>
<feature type="chain" id="PRO_1000204376" description="Translation initiation factor 2 subunit alpha">
    <location>
        <begin position="1"/>
        <end position="273"/>
    </location>
</feature>
<feature type="domain" description="S1 motif" evidence="1">
    <location>
        <begin position="12"/>
        <end position="83"/>
    </location>
</feature>
<protein>
    <recommendedName>
        <fullName evidence="1">Translation initiation factor 2 subunit alpha</fullName>
    </recommendedName>
    <alternativeName>
        <fullName evidence="1">aIF2-alpha</fullName>
    </alternativeName>
    <alternativeName>
        <fullName evidence="1">eIF-2-alpha</fullName>
    </alternativeName>
</protein>
<gene>
    <name evidence="1" type="primary">eif2a</name>
    <name type="ordered locus">TGAM_0809</name>
</gene>
<organism>
    <name type="scientific">Thermococcus gammatolerans (strain DSM 15229 / JCM 11827 / EJ3)</name>
    <dbReference type="NCBI Taxonomy" id="593117"/>
    <lineage>
        <taxon>Archaea</taxon>
        <taxon>Methanobacteriati</taxon>
        <taxon>Methanobacteriota</taxon>
        <taxon>Thermococci</taxon>
        <taxon>Thermococcales</taxon>
        <taxon>Thermococcaceae</taxon>
        <taxon>Thermococcus</taxon>
    </lineage>
</organism>
<name>IF2A_THEGJ</name>
<evidence type="ECO:0000255" key="1">
    <source>
        <dbReference type="HAMAP-Rule" id="MF_00231"/>
    </source>
</evidence>
<proteinExistence type="inferred from homology"/>
<sequence>MPRKAREYPEEGEFVVATVKNIHPYGAFLILDEYPGKEGFMHISEVAPTWVKNIRDYVKEGQKVVVKVIRVDPEKGHIDLSLKRVNQQQRKAKLQEYKRAQKAENLLKMAAEKIGKDFETAWREVWVPLEEEYGEVYAAFEDAAQNGIEVLKGLIPDEWLDALKPIIEAYVEIPTVTIDAEFEITVPKPNGIEIIKEALIRARDRANEEKDIDVKFTYQGAPRYRIDITAPDYYKAEEVLESIAEEILRVIKEAGGEATLIRKEKRIRKIKRR</sequence>
<comment type="function">
    <text evidence="1">eIF-2 functions in the early steps of protein synthesis by forming a ternary complex with GTP and initiator tRNA.</text>
</comment>
<comment type="subunit">
    <text evidence="1">Heterotrimer composed of an alpha, a beta and a gamma chain.</text>
</comment>
<comment type="similarity">
    <text evidence="1">Belongs to the eIF-2-alpha family.</text>
</comment>
<reference key="1">
    <citation type="journal article" date="2007" name="Genome Biol.">
        <title>Genome analysis and genome-wide proteomics of Thermococcus gammatolerans, the most radioresistant organism known amongst the Archaea.</title>
        <authorList>
            <person name="Zivanovic Y."/>
            <person name="Armengaud J."/>
            <person name="Lagorce A."/>
            <person name="Leplat C."/>
            <person name="Guerin P."/>
            <person name="Dutertre M."/>
            <person name="Anthouard V."/>
            <person name="Forterre P."/>
            <person name="Wincker P."/>
            <person name="Confalonieri F."/>
        </authorList>
    </citation>
    <scope>NUCLEOTIDE SEQUENCE [LARGE SCALE GENOMIC DNA]</scope>
    <source>
        <strain>DSM 15229 / JCM 11827 / EJ3</strain>
    </source>
</reference>